<evidence type="ECO:0000250" key="1"/>
<evidence type="ECO:0000255" key="2">
    <source>
        <dbReference type="HAMAP-Rule" id="MF_01491"/>
    </source>
</evidence>
<organism>
    <name type="scientific">Mycoplasma pneumoniae (strain ATCC 29342 / M129 / Subtype 1)</name>
    <name type="common">Mycoplasmoides pneumoniae</name>
    <dbReference type="NCBI Taxonomy" id="272634"/>
    <lineage>
        <taxon>Bacteria</taxon>
        <taxon>Bacillati</taxon>
        <taxon>Mycoplasmatota</taxon>
        <taxon>Mycoplasmoidales</taxon>
        <taxon>Mycoplasmoidaceae</taxon>
        <taxon>Mycoplasmoides</taxon>
    </lineage>
</organism>
<gene>
    <name evidence="2" type="primary">rnj</name>
    <name type="ordered locus">MPN_280</name>
    <name type="ORF">A65_orf569</name>
    <name type="ORF">MP555</name>
</gene>
<proteinExistence type="inferred from homology"/>
<reference key="1">
    <citation type="journal article" date="1996" name="Nucleic Acids Res.">
        <title>Complete sequence analysis of the genome of the bacterium Mycoplasma pneumoniae.</title>
        <authorList>
            <person name="Himmelreich R."/>
            <person name="Hilbert H."/>
            <person name="Plagens H."/>
            <person name="Pirkl E."/>
            <person name="Li B.-C."/>
            <person name="Herrmann R."/>
        </authorList>
    </citation>
    <scope>NUCLEOTIDE SEQUENCE [LARGE SCALE GENOMIC DNA]</scope>
    <source>
        <strain>ATCC 29342 / M129 / Subtype 1</strain>
    </source>
</reference>
<keyword id="KW-0963">Cytoplasm</keyword>
<keyword id="KW-0255">Endonuclease</keyword>
<keyword id="KW-0269">Exonuclease</keyword>
<keyword id="KW-0378">Hydrolase</keyword>
<keyword id="KW-0479">Metal-binding</keyword>
<keyword id="KW-0540">Nuclease</keyword>
<keyword id="KW-1185">Reference proteome</keyword>
<keyword id="KW-0694">RNA-binding</keyword>
<keyword id="KW-0698">rRNA processing</keyword>
<keyword id="KW-0862">Zinc</keyword>
<feature type="chain" id="PRO_0000215272" description="Ribonuclease J">
    <location>
        <begin position="1"/>
        <end position="569"/>
    </location>
</feature>
<feature type="binding site" evidence="2">
    <location>
        <position position="81"/>
    </location>
    <ligand>
        <name>Zn(2+)</name>
        <dbReference type="ChEBI" id="CHEBI:29105"/>
        <label>1</label>
        <note>catalytic</note>
    </ligand>
</feature>
<feature type="binding site" evidence="2">
    <location>
        <position position="83"/>
    </location>
    <ligand>
        <name>Zn(2+)</name>
        <dbReference type="ChEBI" id="CHEBI:29105"/>
        <label>1</label>
        <note>catalytic</note>
    </ligand>
</feature>
<feature type="binding site" evidence="2">
    <location>
        <position position="85"/>
    </location>
    <ligand>
        <name>Zn(2+)</name>
        <dbReference type="ChEBI" id="CHEBI:29105"/>
        <label>2</label>
        <note>catalytic</note>
    </ligand>
</feature>
<feature type="binding site" evidence="2">
    <location>
        <position position="86"/>
    </location>
    <ligand>
        <name>Zn(2+)</name>
        <dbReference type="ChEBI" id="CHEBI:29105"/>
        <label>2</label>
        <note>catalytic</note>
    </ligand>
</feature>
<feature type="binding site" evidence="2">
    <location>
        <position position="150"/>
    </location>
    <ligand>
        <name>Zn(2+)</name>
        <dbReference type="ChEBI" id="CHEBI:29105"/>
        <label>1</label>
        <note>catalytic</note>
    </ligand>
</feature>
<feature type="binding site" evidence="2">
    <location>
        <position position="172"/>
    </location>
    <ligand>
        <name>Zn(2+)</name>
        <dbReference type="ChEBI" id="CHEBI:29105"/>
        <label>1</label>
        <note>catalytic</note>
    </ligand>
</feature>
<feature type="binding site" evidence="2">
    <location>
        <position position="172"/>
    </location>
    <ligand>
        <name>Zn(2+)</name>
        <dbReference type="ChEBI" id="CHEBI:29105"/>
        <label>2</label>
        <note>catalytic</note>
    </ligand>
</feature>
<feature type="binding site" evidence="2">
    <location>
        <begin position="373"/>
        <end position="377"/>
    </location>
    <ligand>
        <name>substrate</name>
    </ligand>
</feature>
<feature type="binding site" evidence="2">
    <location>
        <position position="399"/>
    </location>
    <ligand>
        <name>Zn(2+)</name>
        <dbReference type="ChEBI" id="CHEBI:29105"/>
        <label>2</label>
        <note>catalytic</note>
    </ligand>
</feature>
<accession>P75497</accession>
<comment type="function">
    <text evidence="1">An RNase that has 5'-3' exonuclease and possibly endoonuclease activity. Involved in maturation of rRNA and in some organisms also mRNA maturation and/or decay (By similarity).</text>
</comment>
<comment type="cofactor">
    <cofactor evidence="2">
        <name>Zn(2+)</name>
        <dbReference type="ChEBI" id="CHEBI:29105"/>
    </cofactor>
    <text evidence="2">Binds up to 2 Zn(2+) ions per subunit. It is not clear if Zn(2+) or Mg(2+) is physiologically important.</text>
</comment>
<comment type="subunit">
    <text evidence="2">Homodimer, may be a subunit of the RNA degradosome.</text>
</comment>
<comment type="subcellular location">
    <subcellularLocation>
        <location evidence="2">Cytoplasm</location>
    </subcellularLocation>
</comment>
<comment type="similarity">
    <text evidence="2">Belongs to the metallo-beta-lactamase superfamily. RNA-metabolizing metallo-beta-lactamase-like family. Bacterial RNase J subfamily.</text>
</comment>
<dbReference type="EC" id="3.1.-.-" evidence="2"/>
<dbReference type="EMBL" id="U00089">
    <property type="protein sequence ID" value="AAB96203.1"/>
    <property type="molecule type" value="Genomic_DNA"/>
</dbReference>
<dbReference type="PIR" id="S73881">
    <property type="entry name" value="S73881"/>
</dbReference>
<dbReference type="RefSeq" id="NP_109968.1">
    <property type="nucleotide sequence ID" value="NC_000912.1"/>
</dbReference>
<dbReference type="RefSeq" id="WP_010874637.1">
    <property type="nucleotide sequence ID" value="NZ_OU342337.1"/>
</dbReference>
<dbReference type="SMR" id="P75497"/>
<dbReference type="IntAct" id="P75497">
    <property type="interactions" value="6"/>
</dbReference>
<dbReference type="STRING" id="272634.MPN_280"/>
<dbReference type="EnsemblBacteria" id="AAB96203">
    <property type="protein sequence ID" value="AAB96203"/>
    <property type="gene ID" value="MPN_280"/>
</dbReference>
<dbReference type="KEGG" id="mpn:MPN_280"/>
<dbReference type="PATRIC" id="fig|272634.6.peg.300"/>
<dbReference type="HOGENOM" id="CLU_008727_3_3_14"/>
<dbReference type="OrthoDB" id="9758375at2"/>
<dbReference type="BioCyc" id="MPNE272634:G1GJ3-440-MONOMER"/>
<dbReference type="Proteomes" id="UP000000808">
    <property type="component" value="Chromosome"/>
</dbReference>
<dbReference type="GO" id="GO:0005737">
    <property type="term" value="C:cytoplasm"/>
    <property type="evidence" value="ECO:0007669"/>
    <property type="project" value="UniProtKB-SubCell"/>
</dbReference>
<dbReference type="GO" id="GO:0004534">
    <property type="term" value="F:5'-3' RNA exonuclease activity"/>
    <property type="evidence" value="ECO:0007669"/>
    <property type="project" value="UniProtKB-UniRule"/>
</dbReference>
<dbReference type="GO" id="GO:0003723">
    <property type="term" value="F:RNA binding"/>
    <property type="evidence" value="ECO:0007669"/>
    <property type="project" value="UniProtKB-UniRule"/>
</dbReference>
<dbReference type="GO" id="GO:0004521">
    <property type="term" value="F:RNA endonuclease activity"/>
    <property type="evidence" value="ECO:0007669"/>
    <property type="project" value="UniProtKB-UniRule"/>
</dbReference>
<dbReference type="GO" id="GO:0008270">
    <property type="term" value="F:zinc ion binding"/>
    <property type="evidence" value="ECO:0007669"/>
    <property type="project" value="InterPro"/>
</dbReference>
<dbReference type="GO" id="GO:0006364">
    <property type="term" value="P:rRNA processing"/>
    <property type="evidence" value="ECO:0007669"/>
    <property type="project" value="UniProtKB-UniRule"/>
</dbReference>
<dbReference type="CDD" id="cd07714">
    <property type="entry name" value="RNaseJ_MBL-fold"/>
    <property type="match status" value="1"/>
</dbReference>
<dbReference type="Gene3D" id="3.10.20.580">
    <property type="match status" value="1"/>
</dbReference>
<dbReference type="Gene3D" id="3.40.50.10710">
    <property type="entry name" value="Metallo-hydrolase/oxidoreductase"/>
    <property type="match status" value="1"/>
</dbReference>
<dbReference type="Gene3D" id="3.60.15.10">
    <property type="entry name" value="Ribonuclease Z/Hydroxyacylglutathione hydrolase-like"/>
    <property type="match status" value="1"/>
</dbReference>
<dbReference type="HAMAP" id="MF_01491">
    <property type="entry name" value="RNase_J_bact"/>
    <property type="match status" value="1"/>
</dbReference>
<dbReference type="InterPro" id="IPR001279">
    <property type="entry name" value="Metallo-B-lactamas"/>
</dbReference>
<dbReference type="InterPro" id="IPR036866">
    <property type="entry name" value="RibonucZ/Hydroxyglut_hydro"/>
</dbReference>
<dbReference type="InterPro" id="IPR011108">
    <property type="entry name" value="RMMBL"/>
</dbReference>
<dbReference type="InterPro" id="IPR004613">
    <property type="entry name" value="RNase_J"/>
</dbReference>
<dbReference type="InterPro" id="IPR042173">
    <property type="entry name" value="RNase_J_2"/>
</dbReference>
<dbReference type="InterPro" id="IPR055132">
    <property type="entry name" value="RNase_J_b_CASP"/>
</dbReference>
<dbReference type="InterPro" id="IPR030854">
    <property type="entry name" value="RNase_J_bac"/>
</dbReference>
<dbReference type="InterPro" id="IPR041636">
    <property type="entry name" value="RNase_J_C"/>
</dbReference>
<dbReference type="InterPro" id="IPR001587">
    <property type="entry name" value="RNase_J_CS"/>
</dbReference>
<dbReference type="NCBIfam" id="TIGR00649">
    <property type="entry name" value="MG423"/>
    <property type="match status" value="1"/>
</dbReference>
<dbReference type="PANTHER" id="PTHR43694">
    <property type="entry name" value="RIBONUCLEASE J"/>
    <property type="match status" value="1"/>
</dbReference>
<dbReference type="PANTHER" id="PTHR43694:SF1">
    <property type="entry name" value="RIBONUCLEASE J"/>
    <property type="match status" value="1"/>
</dbReference>
<dbReference type="Pfam" id="PF00753">
    <property type="entry name" value="Lactamase_B"/>
    <property type="match status" value="1"/>
</dbReference>
<dbReference type="Pfam" id="PF07521">
    <property type="entry name" value="RMMBL"/>
    <property type="match status" value="1"/>
</dbReference>
<dbReference type="Pfam" id="PF22505">
    <property type="entry name" value="RNase_J_b_CASP"/>
    <property type="match status" value="1"/>
</dbReference>
<dbReference type="Pfam" id="PF17770">
    <property type="entry name" value="RNase_J_C"/>
    <property type="match status" value="1"/>
</dbReference>
<dbReference type="PIRSF" id="PIRSF004803">
    <property type="entry name" value="RnjA"/>
    <property type="match status" value="1"/>
</dbReference>
<dbReference type="SMART" id="SM00849">
    <property type="entry name" value="Lactamase_B"/>
    <property type="match status" value="1"/>
</dbReference>
<dbReference type="SUPFAM" id="SSF56281">
    <property type="entry name" value="Metallo-hydrolase/oxidoreductase"/>
    <property type="match status" value="1"/>
</dbReference>
<dbReference type="PROSITE" id="PS01292">
    <property type="entry name" value="UPF0036"/>
    <property type="match status" value="1"/>
</dbReference>
<sequence length="569" mass="64086">MIKDFDPSEFVGKTPTKIFAFGGIQEVGKNMYGIEYDDEIIIIDCGIKFASDDLLGIDGIIPSFEYLIENQAKVKALFITHGHEDHIGGVPYLLKQVDVPVIYAPRIAASLILKKVNEHKDAKLNKVVVYDDFSNFETKHFKIDFYRVNHSIPDAFGVCVQTPNGNIVESGDFRFDFAAGGEMLDVHKVVKIAERNVHVFMCETTNAEIPGFSQSEKLIYRNINKIIKEARGRVILTTFASNITRINEIIEIAVNNKRKVCLLGKSMDVNVNISRKIGLMDIDSNDIVEVRDIKNYPDRSILILCTGSQGEDSAALNTMARGKHNWVSLKSTDTIIMSSNPIPGNYAAVENLLNELSKYGVTIFENSPNMKLHASGHATQQELQLMLNLVFPRYLIPIHGEYKMMRTIKNIAQECGINGDDVGLLANGQVMYLIDGKLYYSGEVINADPIYIESRNSSPDLARVIKQRQILSREGMFAVIVVFDKNNNILGMPTLITRGCFFALDSSPLMTKITHSIKRGLENVIQNKRFNTREQMIKELKRVCKETVSYFIWKNKSRNPLISTVLSWV</sequence>
<name>RNJ_MYCPN</name>
<protein>
    <recommendedName>
        <fullName evidence="2">Ribonuclease J</fullName>
        <shortName evidence="2">RNase J</shortName>
        <ecNumber evidence="2">3.1.-.-</ecNumber>
    </recommendedName>
</protein>